<organism>
    <name type="scientific">Legionella pneumophila subsp. pneumophila (strain Philadelphia 1 / ATCC 33152 / DSM 7513)</name>
    <dbReference type="NCBI Taxonomy" id="272624"/>
    <lineage>
        <taxon>Bacteria</taxon>
        <taxon>Pseudomonadati</taxon>
        <taxon>Pseudomonadota</taxon>
        <taxon>Gammaproteobacteria</taxon>
        <taxon>Legionellales</taxon>
        <taxon>Legionellaceae</taxon>
        <taxon>Legionella</taxon>
    </lineage>
</organism>
<proteinExistence type="inferred from homology"/>
<gene>
    <name evidence="1" type="primary">nnrE</name>
    <name type="ordered locus">lpg2821</name>
</gene>
<feature type="chain" id="PRO_0000416364" description="NAD(P)H-hydrate epimerase">
    <location>
        <begin position="1"/>
        <end position="270"/>
    </location>
</feature>
<feature type="domain" description="YjeF N-terminal" evidence="1">
    <location>
        <begin position="25"/>
        <end position="234"/>
    </location>
</feature>
<feature type="binding site" evidence="1">
    <location>
        <begin position="73"/>
        <end position="77"/>
    </location>
    <ligand>
        <name>(6S)-NADPHX</name>
        <dbReference type="ChEBI" id="CHEBI:64076"/>
    </ligand>
</feature>
<feature type="binding site" evidence="1">
    <location>
        <position position="74"/>
    </location>
    <ligand>
        <name>K(+)</name>
        <dbReference type="ChEBI" id="CHEBI:29103"/>
    </ligand>
</feature>
<feature type="binding site" evidence="1">
    <location>
        <position position="144"/>
    </location>
    <ligand>
        <name>K(+)</name>
        <dbReference type="ChEBI" id="CHEBI:29103"/>
    </ligand>
</feature>
<feature type="binding site" evidence="1">
    <location>
        <begin position="148"/>
        <end position="154"/>
    </location>
    <ligand>
        <name>(6S)-NADPHX</name>
        <dbReference type="ChEBI" id="CHEBI:64076"/>
    </ligand>
</feature>
<feature type="binding site" evidence="1">
    <location>
        <position position="177"/>
    </location>
    <ligand>
        <name>(6S)-NADPHX</name>
        <dbReference type="ChEBI" id="CHEBI:64076"/>
    </ligand>
</feature>
<feature type="binding site" evidence="1">
    <location>
        <position position="180"/>
    </location>
    <ligand>
        <name>K(+)</name>
        <dbReference type="ChEBI" id="CHEBI:29103"/>
    </ligand>
</feature>
<reference key="1">
    <citation type="journal article" date="2004" name="Science">
        <title>The genomic sequence of the accidental pathogen Legionella pneumophila.</title>
        <authorList>
            <person name="Chien M."/>
            <person name="Morozova I."/>
            <person name="Shi S."/>
            <person name="Sheng H."/>
            <person name="Chen J."/>
            <person name="Gomez S.M."/>
            <person name="Asamani G."/>
            <person name="Hill K."/>
            <person name="Nuara J."/>
            <person name="Feder M."/>
            <person name="Rineer J."/>
            <person name="Greenberg J.J."/>
            <person name="Steshenko V."/>
            <person name="Park S.H."/>
            <person name="Zhao B."/>
            <person name="Teplitskaya E."/>
            <person name="Edwards J.R."/>
            <person name="Pampou S."/>
            <person name="Georghiou A."/>
            <person name="Chou I.-C."/>
            <person name="Iannuccilli W."/>
            <person name="Ulz M.E."/>
            <person name="Kim D.H."/>
            <person name="Geringer-Sameth A."/>
            <person name="Goldsberry C."/>
            <person name="Morozov P."/>
            <person name="Fischer S.G."/>
            <person name="Segal G."/>
            <person name="Qu X."/>
            <person name="Rzhetsky A."/>
            <person name="Zhang P."/>
            <person name="Cayanis E."/>
            <person name="De Jong P.J."/>
            <person name="Ju J."/>
            <person name="Kalachikov S."/>
            <person name="Shuman H.A."/>
            <person name="Russo J.J."/>
        </authorList>
    </citation>
    <scope>NUCLEOTIDE SEQUENCE [LARGE SCALE GENOMIC DNA]</scope>
    <source>
        <strain>Philadelphia 1 / ATCC 33152 / DSM 7513</strain>
    </source>
</reference>
<protein>
    <recommendedName>
        <fullName evidence="1">NAD(P)H-hydrate epimerase</fullName>
        <ecNumber evidence="1">5.1.99.6</ecNumber>
    </recommendedName>
    <alternativeName>
        <fullName evidence="1">NAD(P)HX epimerase</fullName>
    </alternativeName>
</protein>
<comment type="function">
    <text evidence="1">Catalyzes the epimerization of the S- and R-forms of NAD(P)HX, a damaged form of NAD(P)H that is a result of enzymatic or heat-dependent hydration. This is a prerequisite for the S-specific NAD(P)H-hydrate dehydratase to allow the repair of both epimers of NAD(P)HX.</text>
</comment>
<comment type="catalytic activity">
    <reaction evidence="1">
        <text>(6R)-NADHX = (6S)-NADHX</text>
        <dbReference type="Rhea" id="RHEA:32215"/>
        <dbReference type="ChEBI" id="CHEBI:64074"/>
        <dbReference type="ChEBI" id="CHEBI:64075"/>
        <dbReference type="EC" id="5.1.99.6"/>
    </reaction>
</comment>
<comment type="catalytic activity">
    <reaction evidence="1">
        <text>(6R)-NADPHX = (6S)-NADPHX</text>
        <dbReference type="Rhea" id="RHEA:32227"/>
        <dbReference type="ChEBI" id="CHEBI:64076"/>
        <dbReference type="ChEBI" id="CHEBI:64077"/>
        <dbReference type="EC" id="5.1.99.6"/>
    </reaction>
</comment>
<comment type="cofactor">
    <cofactor evidence="1">
        <name>K(+)</name>
        <dbReference type="ChEBI" id="CHEBI:29103"/>
    </cofactor>
    <text evidence="1">Binds 1 potassium ion per subunit.</text>
</comment>
<comment type="similarity">
    <text evidence="1">Belongs to the NnrE/AIBP family.</text>
</comment>
<keyword id="KW-0413">Isomerase</keyword>
<keyword id="KW-0479">Metal-binding</keyword>
<keyword id="KW-0520">NAD</keyword>
<keyword id="KW-0521">NADP</keyword>
<keyword id="KW-0547">Nucleotide-binding</keyword>
<keyword id="KW-0630">Potassium</keyword>
<keyword id="KW-1185">Reference proteome</keyword>
<name>NNRE_LEGPH</name>
<evidence type="ECO:0000255" key="1">
    <source>
        <dbReference type="HAMAP-Rule" id="MF_01966"/>
    </source>
</evidence>
<accession>Q5ZRQ9</accession>
<sequence length="270" mass="30300">MDYYFTKGKPQLVNMKTPVYLVTQFQQLMDLMQNQYQVSCLELMQRSGKAACDFLVYRWPKVKKISIFCGRGDNGGQGYVLAQQAKKMGMIPTVWQVGHQMSMSKPPQMHEEVWYEMNSCHQQGILLHTYSPDIDLGDPELIVDALFGVGLYGHVRPEIASLLQRLQQFTVPILAIEVPTGINASTGEIAGNALAATATITFLCMKLGLLINDGKIYSGEIAFDDLLAPEAIYQQVKGIEKSSLLDSSTCFSKKIWYRNKTQKGWQLSIN</sequence>
<dbReference type="EC" id="5.1.99.6" evidence="1"/>
<dbReference type="EMBL" id="AE017354">
    <property type="protein sequence ID" value="AAU28869.1"/>
    <property type="molecule type" value="Genomic_DNA"/>
</dbReference>
<dbReference type="RefSeq" id="WP_010948508.1">
    <property type="nucleotide sequence ID" value="NC_002942.5"/>
</dbReference>
<dbReference type="RefSeq" id="YP_096816.1">
    <property type="nucleotide sequence ID" value="NC_002942.5"/>
</dbReference>
<dbReference type="SMR" id="Q5ZRQ9"/>
<dbReference type="STRING" id="272624.lpg2821"/>
<dbReference type="PaxDb" id="272624-lpg2821"/>
<dbReference type="KEGG" id="lpn:lpg2821"/>
<dbReference type="PATRIC" id="fig|272624.6.peg.3004"/>
<dbReference type="eggNOG" id="COG0062">
    <property type="taxonomic scope" value="Bacteria"/>
</dbReference>
<dbReference type="HOGENOM" id="CLU_024853_0_1_6"/>
<dbReference type="OrthoDB" id="9806925at2"/>
<dbReference type="Proteomes" id="UP000000609">
    <property type="component" value="Chromosome"/>
</dbReference>
<dbReference type="GO" id="GO:0046872">
    <property type="term" value="F:metal ion binding"/>
    <property type="evidence" value="ECO:0007669"/>
    <property type="project" value="UniProtKB-KW"/>
</dbReference>
<dbReference type="GO" id="GO:0052856">
    <property type="term" value="F:NAD(P)HX epimerase activity"/>
    <property type="evidence" value="ECO:0007669"/>
    <property type="project" value="UniProtKB-UniRule"/>
</dbReference>
<dbReference type="GO" id="GO:0000166">
    <property type="term" value="F:nucleotide binding"/>
    <property type="evidence" value="ECO:0007669"/>
    <property type="project" value="UniProtKB-KW"/>
</dbReference>
<dbReference type="Gene3D" id="3.40.50.10260">
    <property type="entry name" value="YjeF N-terminal domain"/>
    <property type="match status" value="1"/>
</dbReference>
<dbReference type="HAMAP" id="MF_01966">
    <property type="entry name" value="NADHX_epimerase"/>
    <property type="match status" value="1"/>
</dbReference>
<dbReference type="InterPro" id="IPR004443">
    <property type="entry name" value="YjeF_N_dom"/>
</dbReference>
<dbReference type="InterPro" id="IPR036652">
    <property type="entry name" value="YjeF_N_dom_sf"/>
</dbReference>
<dbReference type="NCBIfam" id="TIGR00197">
    <property type="entry name" value="yjeF_nterm"/>
    <property type="match status" value="1"/>
</dbReference>
<dbReference type="Pfam" id="PF03853">
    <property type="entry name" value="YjeF_N"/>
    <property type="match status" value="1"/>
</dbReference>
<dbReference type="SUPFAM" id="SSF64153">
    <property type="entry name" value="YjeF N-terminal domain-like"/>
    <property type="match status" value="1"/>
</dbReference>
<dbReference type="PROSITE" id="PS51385">
    <property type="entry name" value="YJEF_N"/>
    <property type="match status" value="1"/>
</dbReference>